<dbReference type="EC" id="3.-.-.-" evidence="2"/>
<dbReference type="EMBL" id="AE017355">
    <property type="protein sequence ID" value="AAT63971.1"/>
    <property type="molecule type" value="Genomic_DNA"/>
</dbReference>
<dbReference type="RefSeq" id="WP_000605880.1">
    <property type="nucleotide sequence ID" value="NC_005957.1"/>
</dbReference>
<dbReference type="RefSeq" id="YP_039340.1">
    <property type="nucleotide sequence ID" value="NC_005957.1"/>
</dbReference>
<dbReference type="SMR" id="Q6HAT6"/>
<dbReference type="KEGG" id="btk:BT9727_5031"/>
<dbReference type="PATRIC" id="fig|281309.8.peg.5351"/>
<dbReference type="HOGENOM" id="CLU_017168_0_1_9"/>
<dbReference type="Proteomes" id="UP000001301">
    <property type="component" value="Chromosome"/>
</dbReference>
<dbReference type="GO" id="GO:0004519">
    <property type="term" value="F:endonuclease activity"/>
    <property type="evidence" value="ECO:0007669"/>
    <property type="project" value="UniProtKB-UniRule"/>
</dbReference>
<dbReference type="GO" id="GO:0006289">
    <property type="term" value="P:nucleotide-excision repair"/>
    <property type="evidence" value="ECO:0007669"/>
    <property type="project" value="InterPro"/>
</dbReference>
<dbReference type="GO" id="GO:0006290">
    <property type="term" value="P:pyrimidine dimer repair"/>
    <property type="evidence" value="ECO:0007669"/>
    <property type="project" value="UniProtKB-UniRule"/>
</dbReference>
<dbReference type="GO" id="GO:0009411">
    <property type="term" value="P:response to UV"/>
    <property type="evidence" value="ECO:0007669"/>
    <property type="project" value="InterPro"/>
</dbReference>
<dbReference type="Gene3D" id="3.20.20.150">
    <property type="entry name" value="Divalent-metal-dependent TIM barrel enzymes"/>
    <property type="match status" value="1"/>
</dbReference>
<dbReference type="HAMAP" id="MF_00606">
    <property type="entry name" value="UV_endonuclease"/>
    <property type="match status" value="1"/>
</dbReference>
<dbReference type="InterPro" id="IPR004601">
    <property type="entry name" value="UvdE"/>
</dbReference>
<dbReference type="InterPro" id="IPR023520">
    <property type="entry name" value="UvdE_bac"/>
</dbReference>
<dbReference type="InterPro" id="IPR036237">
    <property type="entry name" value="Xyl_isomerase-like_sf"/>
</dbReference>
<dbReference type="NCBIfam" id="TIGR00629">
    <property type="entry name" value="uvde"/>
    <property type="match status" value="1"/>
</dbReference>
<dbReference type="PANTHER" id="PTHR31290">
    <property type="entry name" value="UV-DAMAGE ENDONUCLEASE"/>
    <property type="match status" value="1"/>
</dbReference>
<dbReference type="PANTHER" id="PTHR31290:SF5">
    <property type="entry name" value="UV-DAMAGE ENDONUCLEASE"/>
    <property type="match status" value="1"/>
</dbReference>
<dbReference type="Pfam" id="PF03851">
    <property type="entry name" value="UvdE"/>
    <property type="match status" value="1"/>
</dbReference>
<dbReference type="SUPFAM" id="SSF51658">
    <property type="entry name" value="Xylose isomerase-like"/>
    <property type="match status" value="1"/>
</dbReference>
<keyword id="KW-0227">DNA damage</keyword>
<keyword id="KW-0228">DNA excision</keyword>
<keyword id="KW-0234">DNA repair</keyword>
<keyword id="KW-0255">Endonuclease</keyword>
<keyword id="KW-0378">Hydrolase</keyword>
<keyword id="KW-0540">Nuclease</keyword>
<sequence>MIMRFGYVSHAMALWDCSPAKTITFTSFQKLSKQEREDKLYDVTKQNLEHTLRILHYNIAHEIPLYRLSSSIVPLATHPEVEFDYIGAFTPLWRKIGALIKEHNLRISFHPNQFTLFTSDKPHITTNAITDMTYHYKVLDAIGIADSSYINIHVGGAYGNKEKAIERFHENIKKLPAHIKKQMTLENDDKTYTTAETLSICQKEKIPFVFDYHHHMANLCEEPLEELLPAIFETWSHTNIVPKVHISSPKSKKEFRAHAEYIDLEFIKPFLHVAKKINHNFDIMIESKQKDLAMLQFIQELSSIRGIKRISSSTLQW</sequence>
<evidence type="ECO:0000250" key="1"/>
<evidence type="ECO:0000255" key="2">
    <source>
        <dbReference type="HAMAP-Rule" id="MF_00606"/>
    </source>
</evidence>
<reference key="1">
    <citation type="journal article" date="2006" name="J. Bacteriol.">
        <title>Pathogenomic sequence analysis of Bacillus cereus and Bacillus thuringiensis isolates closely related to Bacillus anthracis.</title>
        <authorList>
            <person name="Han C.S."/>
            <person name="Xie G."/>
            <person name="Challacombe J.F."/>
            <person name="Altherr M.R."/>
            <person name="Bhotika S.S."/>
            <person name="Bruce D."/>
            <person name="Campbell C.S."/>
            <person name="Campbell M.L."/>
            <person name="Chen J."/>
            <person name="Chertkov O."/>
            <person name="Cleland C."/>
            <person name="Dimitrijevic M."/>
            <person name="Doggett N.A."/>
            <person name="Fawcett J.J."/>
            <person name="Glavina T."/>
            <person name="Goodwin L.A."/>
            <person name="Hill K.K."/>
            <person name="Hitchcock P."/>
            <person name="Jackson P.J."/>
            <person name="Keim P."/>
            <person name="Kewalramani A.R."/>
            <person name="Longmire J."/>
            <person name="Lucas S."/>
            <person name="Malfatti S."/>
            <person name="McMurry K."/>
            <person name="Meincke L.J."/>
            <person name="Misra M."/>
            <person name="Moseman B.L."/>
            <person name="Mundt M."/>
            <person name="Munk A.C."/>
            <person name="Okinaka R.T."/>
            <person name="Parson-Quintana B."/>
            <person name="Reilly L.P."/>
            <person name="Richardson P."/>
            <person name="Robinson D.L."/>
            <person name="Rubin E."/>
            <person name="Saunders E."/>
            <person name="Tapia R."/>
            <person name="Tesmer J.G."/>
            <person name="Thayer N."/>
            <person name="Thompson L.S."/>
            <person name="Tice H."/>
            <person name="Ticknor L.O."/>
            <person name="Wills P.L."/>
            <person name="Brettin T.S."/>
            <person name="Gilna P."/>
        </authorList>
    </citation>
    <scope>NUCLEOTIDE SEQUENCE [LARGE SCALE GENOMIC DNA]</scope>
    <source>
        <strain>97-27</strain>
    </source>
</reference>
<proteinExistence type="inferred from homology"/>
<feature type="chain" id="PRO_1000025882" description="UV DNA damage endonuclease">
    <location>
        <begin position="1"/>
        <end position="317"/>
    </location>
</feature>
<organism>
    <name type="scientific">Bacillus thuringiensis subsp. konkukian (strain 97-27)</name>
    <dbReference type="NCBI Taxonomy" id="281309"/>
    <lineage>
        <taxon>Bacteria</taxon>
        <taxon>Bacillati</taxon>
        <taxon>Bacillota</taxon>
        <taxon>Bacilli</taxon>
        <taxon>Bacillales</taxon>
        <taxon>Bacillaceae</taxon>
        <taxon>Bacillus</taxon>
        <taxon>Bacillus cereus group</taxon>
    </lineage>
</organism>
<gene>
    <name evidence="2" type="primary">uvsE</name>
    <name type="ordered locus">BT9727_5031</name>
</gene>
<accession>Q6HAT6</accession>
<name>UVSE_BACHK</name>
<protein>
    <recommendedName>
        <fullName evidence="2">UV DNA damage endonuclease</fullName>
        <shortName evidence="2">UV-endonuclease</shortName>
        <shortName evidence="2">UVED</shortName>
        <ecNumber evidence="2">3.-.-.-</ecNumber>
    </recommendedName>
</protein>
<comment type="function">
    <text evidence="1">Component in a DNA repair pathway. Removal of UV LIGHT damaged nucleotides. Recognizes pyrimidine dimers and cleave a phosphodiester bond immediately 5' to the lesion (By similarity).</text>
</comment>
<comment type="similarity">
    <text evidence="2">Belongs to the uve1/UvsE family.</text>
</comment>